<feature type="chain" id="PRO_1000009464" description="Leucine--tRNA ligase">
    <location>
        <begin position="1"/>
        <end position="865"/>
    </location>
</feature>
<feature type="short sequence motif" description="'HIGH' region">
    <location>
        <begin position="36"/>
        <end position="46"/>
    </location>
</feature>
<feature type="short sequence motif" description="'KMSKS' region">
    <location>
        <begin position="608"/>
        <end position="612"/>
    </location>
</feature>
<feature type="binding site" evidence="1">
    <location>
        <position position="611"/>
    </location>
    <ligand>
        <name>ATP</name>
        <dbReference type="ChEBI" id="CHEBI:30616"/>
    </ligand>
</feature>
<feature type="strand" evidence="3">
    <location>
        <begin position="224"/>
        <end position="230"/>
    </location>
</feature>
<feature type="strand" evidence="3">
    <location>
        <begin position="236"/>
        <end position="242"/>
    </location>
</feature>
<feature type="helix" evidence="3">
    <location>
        <begin position="244"/>
        <end position="249"/>
    </location>
</feature>
<feature type="strand" evidence="3">
    <location>
        <begin position="252"/>
        <end position="255"/>
    </location>
</feature>
<feature type="helix" evidence="3">
    <location>
        <begin position="261"/>
        <end position="265"/>
    </location>
</feature>
<feature type="helix" evidence="3">
    <location>
        <begin position="268"/>
        <end position="276"/>
    </location>
</feature>
<feature type="strand" evidence="2">
    <location>
        <begin position="282"/>
        <end position="285"/>
    </location>
</feature>
<feature type="strand" evidence="3">
    <location>
        <begin position="288"/>
        <end position="296"/>
    </location>
</feature>
<feature type="strand" evidence="3">
    <location>
        <begin position="298"/>
        <end position="301"/>
    </location>
</feature>
<feature type="strand" evidence="3">
    <location>
        <begin position="303"/>
        <end position="309"/>
    </location>
</feature>
<feature type="strand" evidence="2">
    <location>
        <begin position="314"/>
        <end position="316"/>
    </location>
</feature>
<feature type="strand" evidence="3">
    <location>
        <begin position="319"/>
        <end position="323"/>
    </location>
</feature>
<feature type="turn" evidence="3">
    <location>
        <begin position="325"/>
        <end position="327"/>
    </location>
</feature>
<feature type="helix" evidence="3">
    <location>
        <begin position="329"/>
        <end position="338"/>
    </location>
</feature>
<feature type="turn" evidence="2">
    <location>
        <begin position="379"/>
        <end position="381"/>
    </location>
</feature>
<feature type="helix" evidence="3">
    <location>
        <begin position="390"/>
        <end position="392"/>
    </location>
</feature>
<feature type="helix" evidence="3">
    <location>
        <begin position="397"/>
        <end position="410"/>
    </location>
</feature>
<feature type="strand" evidence="3">
    <location>
        <begin position="413"/>
        <end position="416"/>
    </location>
</feature>
<proteinExistence type="evidence at protein level"/>
<organism>
    <name type="scientific">Wolbachia sp. subsp. Brugia malayi (strain TRS)</name>
    <dbReference type="NCBI Taxonomy" id="292805"/>
    <lineage>
        <taxon>Bacteria</taxon>
        <taxon>Pseudomonadati</taxon>
        <taxon>Pseudomonadota</taxon>
        <taxon>Alphaproteobacteria</taxon>
        <taxon>Rickettsiales</taxon>
        <taxon>Anaplasmataceae</taxon>
        <taxon>Wolbachieae</taxon>
        <taxon>Wolbachia</taxon>
    </lineage>
</organism>
<name>SYL_WOLTR</name>
<comment type="catalytic activity">
    <reaction evidence="1">
        <text>tRNA(Leu) + L-leucine + ATP = L-leucyl-tRNA(Leu) + AMP + diphosphate</text>
        <dbReference type="Rhea" id="RHEA:11688"/>
        <dbReference type="Rhea" id="RHEA-COMP:9613"/>
        <dbReference type="Rhea" id="RHEA-COMP:9622"/>
        <dbReference type="ChEBI" id="CHEBI:30616"/>
        <dbReference type="ChEBI" id="CHEBI:33019"/>
        <dbReference type="ChEBI" id="CHEBI:57427"/>
        <dbReference type="ChEBI" id="CHEBI:78442"/>
        <dbReference type="ChEBI" id="CHEBI:78494"/>
        <dbReference type="ChEBI" id="CHEBI:456215"/>
        <dbReference type="EC" id="6.1.1.4"/>
    </reaction>
</comment>
<comment type="subcellular location">
    <subcellularLocation>
        <location evidence="1">Cytoplasm</location>
    </subcellularLocation>
</comment>
<comment type="similarity">
    <text evidence="1">Belongs to the class-I aminoacyl-tRNA synthetase family.</text>
</comment>
<keyword id="KW-0002">3D-structure</keyword>
<keyword id="KW-0030">Aminoacyl-tRNA synthetase</keyword>
<keyword id="KW-0067">ATP-binding</keyword>
<keyword id="KW-0963">Cytoplasm</keyword>
<keyword id="KW-0436">Ligase</keyword>
<keyword id="KW-0547">Nucleotide-binding</keyword>
<keyword id="KW-0648">Protein biosynthesis</keyword>
<keyword id="KW-1185">Reference proteome</keyword>
<reference key="1">
    <citation type="journal article" date="2005" name="PLoS Biol.">
        <title>The Wolbachia genome of Brugia malayi: endosymbiont evolution within a human pathogenic nematode.</title>
        <authorList>
            <person name="Foster J."/>
            <person name="Ganatra M."/>
            <person name="Kamal I."/>
            <person name="Ware J."/>
            <person name="Makarova K."/>
            <person name="Ivanova N."/>
            <person name="Bhattacharyya A."/>
            <person name="Kapatral V."/>
            <person name="Kumar S."/>
            <person name="Posfai J."/>
            <person name="Vincze T."/>
            <person name="Ingram J."/>
            <person name="Moran L."/>
            <person name="Lapidus A."/>
            <person name="Omelchenko M."/>
            <person name="Kyrpides N."/>
            <person name="Ghedin E."/>
            <person name="Wang S."/>
            <person name="Goltsman E."/>
            <person name="Joukov V."/>
            <person name="Ostrovskaya O."/>
            <person name="Tsukerman K."/>
            <person name="Mazur M."/>
            <person name="Comb D."/>
            <person name="Koonin E."/>
            <person name="Slatko B."/>
        </authorList>
    </citation>
    <scope>NUCLEOTIDE SEQUENCE [LARGE SCALE GENOMIC DNA]</scope>
    <source>
        <strain>TRS</strain>
    </source>
</reference>
<protein>
    <recommendedName>
        <fullName evidence="1">Leucine--tRNA ligase</fullName>
        <ecNumber evidence="1">6.1.1.4</ecNumber>
    </recommendedName>
    <alternativeName>
        <fullName evidence="1">Leucyl-tRNA synthetase</fullName>
        <shortName evidence="1">LeuRS</shortName>
    </alternativeName>
</protein>
<dbReference type="EC" id="6.1.1.4" evidence="1"/>
<dbReference type="EMBL" id="AE017321">
    <property type="protein sequence ID" value="AAW71193.1"/>
    <property type="molecule type" value="Genomic_DNA"/>
</dbReference>
<dbReference type="RefSeq" id="WP_011256803.1">
    <property type="nucleotide sequence ID" value="NC_006833.1"/>
</dbReference>
<dbReference type="PDB" id="8POQ">
    <property type="method" value="X-ray"/>
    <property type="resolution" value="3.00 A"/>
    <property type="chains" value="A/B/C/D=219-418"/>
</dbReference>
<dbReference type="PDB" id="8POR">
    <property type="method" value="X-ray"/>
    <property type="resolution" value="1.85 A"/>
    <property type="chains" value="A=219-418"/>
</dbReference>
<dbReference type="PDB" id="8POS">
    <property type="method" value="X-ray"/>
    <property type="resolution" value="2.14 A"/>
    <property type="chains" value="A/B=219-418"/>
</dbReference>
<dbReference type="PDBsum" id="8POQ"/>
<dbReference type="PDBsum" id="8POR"/>
<dbReference type="PDBsum" id="8POS"/>
<dbReference type="SMR" id="Q5GS31"/>
<dbReference type="STRING" id="292805.Wbm0605"/>
<dbReference type="KEGG" id="wbm:Wbm0605"/>
<dbReference type="eggNOG" id="COG0495">
    <property type="taxonomic scope" value="Bacteria"/>
</dbReference>
<dbReference type="HOGENOM" id="CLU_004427_0_0_5"/>
<dbReference type="Proteomes" id="UP000000534">
    <property type="component" value="Chromosome"/>
</dbReference>
<dbReference type="GO" id="GO:0005737">
    <property type="term" value="C:cytoplasm"/>
    <property type="evidence" value="ECO:0007669"/>
    <property type="project" value="UniProtKB-SubCell"/>
</dbReference>
<dbReference type="GO" id="GO:0002161">
    <property type="term" value="F:aminoacyl-tRNA deacylase activity"/>
    <property type="evidence" value="ECO:0007669"/>
    <property type="project" value="InterPro"/>
</dbReference>
<dbReference type="GO" id="GO:0005524">
    <property type="term" value="F:ATP binding"/>
    <property type="evidence" value="ECO:0007669"/>
    <property type="project" value="UniProtKB-UniRule"/>
</dbReference>
<dbReference type="GO" id="GO:0004823">
    <property type="term" value="F:leucine-tRNA ligase activity"/>
    <property type="evidence" value="ECO:0007669"/>
    <property type="project" value="UniProtKB-UniRule"/>
</dbReference>
<dbReference type="GO" id="GO:0006429">
    <property type="term" value="P:leucyl-tRNA aminoacylation"/>
    <property type="evidence" value="ECO:0007669"/>
    <property type="project" value="UniProtKB-UniRule"/>
</dbReference>
<dbReference type="CDD" id="cd07958">
    <property type="entry name" value="Anticodon_Ia_Leu_BEm"/>
    <property type="match status" value="1"/>
</dbReference>
<dbReference type="CDD" id="cd00812">
    <property type="entry name" value="LeuRS_core"/>
    <property type="match status" value="1"/>
</dbReference>
<dbReference type="FunFam" id="1.10.730.10:FF:000002">
    <property type="entry name" value="Leucine--tRNA ligase"/>
    <property type="match status" value="2"/>
</dbReference>
<dbReference type="Gene3D" id="3.40.50.620">
    <property type="entry name" value="HUPs"/>
    <property type="match status" value="2"/>
</dbReference>
<dbReference type="Gene3D" id="1.10.730.10">
    <property type="entry name" value="Isoleucyl-tRNA Synthetase, Domain 1"/>
    <property type="match status" value="1"/>
</dbReference>
<dbReference type="HAMAP" id="MF_00049_B">
    <property type="entry name" value="Leu_tRNA_synth_B"/>
    <property type="match status" value="1"/>
</dbReference>
<dbReference type="InterPro" id="IPR001412">
    <property type="entry name" value="aa-tRNA-synth_I_CS"/>
</dbReference>
<dbReference type="InterPro" id="IPR002300">
    <property type="entry name" value="aa-tRNA-synth_Ia"/>
</dbReference>
<dbReference type="InterPro" id="IPR002302">
    <property type="entry name" value="Leu-tRNA-ligase"/>
</dbReference>
<dbReference type="InterPro" id="IPR025709">
    <property type="entry name" value="Leu_tRNA-synth_edit"/>
</dbReference>
<dbReference type="InterPro" id="IPR013155">
    <property type="entry name" value="M/V/L/I-tRNA-synth_anticd-bd"/>
</dbReference>
<dbReference type="InterPro" id="IPR015413">
    <property type="entry name" value="Methionyl/Leucyl_tRNA_Synth"/>
</dbReference>
<dbReference type="InterPro" id="IPR014729">
    <property type="entry name" value="Rossmann-like_a/b/a_fold"/>
</dbReference>
<dbReference type="InterPro" id="IPR009080">
    <property type="entry name" value="tRNAsynth_Ia_anticodon-bd"/>
</dbReference>
<dbReference type="InterPro" id="IPR009008">
    <property type="entry name" value="Val/Leu/Ile-tRNA-synth_edit"/>
</dbReference>
<dbReference type="NCBIfam" id="TIGR00396">
    <property type="entry name" value="leuS_bact"/>
    <property type="match status" value="1"/>
</dbReference>
<dbReference type="PANTHER" id="PTHR43740:SF2">
    <property type="entry name" value="LEUCINE--TRNA LIGASE, MITOCHONDRIAL"/>
    <property type="match status" value="1"/>
</dbReference>
<dbReference type="PANTHER" id="PTHR43740">
    <property type="entry name" value="LEUCYL-TRNA SYNTHETASE"/>
    <property type="match status" value="1"/>
</dbReference>
<dbReference type="Pfam" id="PF08264">
    <property type="entry name" value="Anticodon_1"/>
    <property type="match status" value="1"/>
</dbReference>
<dbReference type="Pfam" id="PF00133">
    <property type="entry name" value="tRNA-synt_1"/>
    <property type="match status" value="2"/>
</dbReference>
<dbReference type="Pfam" id="PF13603">
    <property type="entry name" value="tRNA-synt_1_2"/>
    <property type="match status" value="1"/>
</dbReference>
<dbReference type="Pfam" id="PF09334">
    <property type="entry name" value="tRNA-synt_1g"/>
    <property type="match status" value="1"/>
</dbReference>
<dbReference type="PRINTS" id="PR00985">
    <property type="entry name" value="TRNASYNTHLEU"/>
</dbReference>
<dbReference type="SUPFAM" id="SSF47323">
    <property type="entry name" value="Anticodon-binding domain of a subclass of class I aminoacyl-tRNA synthetases"/>
    <property type="match status" value="1"/>
</dbReference>
<dbReference type="SUPFAM" id="SSF52374">
    <property type="entry name" value="Nucleotidylyl transferase"/>
    <property type="match status" value="1"/>
</dbReference>
<dbReference type="SUPFAM" id="SSF50677">
    <property type="entry name" value="ValRS/IleRS/LeuRS editing domain"/>
    <property type="match status" value="1"/>
</dbReference>
<dbReference type="PROSITE" id="PS00178">
    <property type="entry name" value="AA_TRNA_LIGASE_I"/>
    <property type="match status" value="1"/>
</dbReference>
<gene>
    <name evidence="1" type="primary">leuS</name>
    <name type="ordered locus">Wbm0605</name>
</gene>
<accession>Q5GS31</accession>
<sequence length="865" mass="98820">MKYDFKNVEKFYQDRWDFSIGKNNEQGKCYVLEMFPYPSGKIHMGHLRNYVIGDVIARYKRACGFEVLHPIGWDAFGLPAENAARDNNVNPAAWTKENIDNMRAQLKSIGLSYNWERELSTCEADYYKHEQKFFLDFLKQGLVYRKKSWVNWDPIDQTVLANEQVVDGKGWRSGAIVEKRELSQWFLKITDFAEDLLECLQGLENWPEKVKMMQDRWIGKSEGVTIEFKIVGLNKKLKVFTTCPHTLFGASFCAVAIEHPIVQDLMSKEIQDLISSIKIQGKNNEKVGIYTGLNVKHPFLDKELPLYVANFVLMEYREGAIFGCPAHDQRDFEFAQEYDLPIIPVISSARLGIIPACDQGSYTGSQCQATRMADGLNEEYTNNSIMFNSEFLNGLTVSEARKVIVEKLEEKGIGKKTINYRLHDWGVSRQRYWGCPIPVIYCKNCGTVPVPEEDLPVTLPTDVDFTSGGNPLDKHPTWKFVNCPKCKEQAERETDTFDTFFESSWYFAAFCSENKSIDKNACNRFMPVDYYIGGIEHAILHLLYSRFFCRALTKCGYFNVKEPFSTLITQGMVCHVTYKDKNGKWLFPEEAKRLITQGAKIQVGKVEKMSKSKKNTVDPNFIIEKYGADTARLFVLSDTPPEKDMEWSNDGVEGCSRYINKLWRMVMQFKPVVILNQSPVKQVADTEIQKEDMLSHAGMIPDKNVTGKFLGYRKKIHKLLHGLTDDLENCRLNCVVAKFREMTNLIAEIDVKTGKSLINEGICILIRVVEPFIPHLAESLWREIGGEGMLYLQPWPKAAKSLLIDDVVTVAVQINGKLRATIEVAINLHQEELKQIAINSVSNRVDQSKVRAVYAVSNKIVNIVT</sequence>
<evidence type="ECO:0000255" key="1">
    <source>
        <dbReference type="HAMAP-Rule" id="MF_00049"/>
    </source>
</evidence>
<evidence type="ECO:0007829" key="2">
    <source>
        <dbReference type="PDB" id="8POQ"/>
    </source>
</evidence>
<evidence type="ECO:0007829" key="3">
    <source>
        <dbReference type="PDB" id="8POR"/>
    </source>
</evidence>